<comment type="similarity">
    <text evidence="1">Belongs to the elongation factor P family.</text>
</comment>
<comment type="sequence caution" evidence="2">
    <conflict type="erroneous initiation">
        <sequence resource="EMBL-CDS" id="CAG20319"/>
    </conflict>
</comment>
<proteinExistence type="inferred from homology"/>
<sequence length="191" mass="21206">MPKASEIKKFAAIEHNGKVFLVKDIKKLTPSGRAGASLYRMRLYDVATGSKTDESFKADEMITLADFRRHPVMFSYIDGEEYVFMDSEDYTPYNFNKDSIVEELLFITEDTQGLQVLTVDDLPVAIELPATVDMVISETDPSIKGASASARTKPAIMSTGLSVQVPEYIASGEKIKINTAEQKFMSRADSK</sequence>
<accession>Q6LQV7</accession>
<protein>
    <recommendedName>
        <fullName evidence="1">Elongation factor P-like protein</fullName>
    </recommendedName>
</protein>
<reference key="1">
    <citation type="journal article" date="2005" name="Science">
        <title>Life at depth: Photobacterium profundum genome sequence and expression analysis.</title>
        <authorList>
            <person name="Vezzi A."/>
            <person name="Campanaro S."/>
            <person name="D'Angelo M."/>
            <person name="Simonato F."/>
            <person name="Vitulo N."/>
            <person name="Lauro F.M."/>
            <person name="Cestaro A."/>
            <person name="Malacrida G."/>
            <person name="Simionati B."/>
            <person name="Cannata N."/>
            <person name="Romualdi C."/>
            <person name="Bartlett D.H."/>
            <person name="Valle G."/>
        </authorList>
    </citation>
    <scope>NUCLEOTIDE SEQUENCE [LARGE SCALE GENOMIC DNA]</scope>
    <source>
        <strain>ATCC BAA-1253 / SS9</strain>
    </source>
</reference>
<feature type="chain" id="PRO_0000094384" description="Elongation factor P-like protein">
    <location>
        <begin position="1"/>
        <end position="191"/>
    </location>
</feature>
<name>EFPL_PHOPR</name>
<organism>
    <name type="scientific">Photobacterium profundum (strain SS9)</name>
    <dbReference type="NCBI Taxonomy" id="298386"/>
    <lineage>
        <taxon>Bacteria</taxon>
        <taxon>Pseudomonadati</taxon>
        <taxon>Pseudomonadota</taxon>
        <taxon>Gammaproteobacteria</taxon>
        <taxon>Vibrionales</taxon>
        <taxon>Vibrionaceae</taxon>
        <taxon>Photobacterium</taxon>
    </lineage>
</organism>
<gene>
    <name type="ordered locus">PBPRA1915</name>
</gene>
<evidence type="ECO:0000255" key="1">
    <source>
        <dbReference type="HAMAP-Rule" id="MF_00646"/>
    </source>
</evidence>
<evidence type="ECO:0000305" key="2"/>
<dbReference type="EMBL" id="CR378669">
    <property type="protein sequence ID" value="CAG20319.1"/>
    <property type="status" value="ALT_INIT"/>
    <property type="molecule type" value="Genomic_DNA"/>
</dbReference>
<dbReference type="RefSeq" id="WP_011218623.1">
    <property type="nucleotide sequence ID" value="NC_006370.1"/>
</dbReference>
<dbReference type="SMR" id="Q6LQV7"/>
<dbReference type="STRING" id="298386.PBPRA1915"/>
<dbReference type="KEGG" id="ppr:PBPRA1915"/>
<dbReference type="eggNOG" id="COG0231">
    <property type="taxonomic scope" value="Bacteria"/>
</dbReference>
<dbReference type="HOGENOM" id="CLU_074944_2_0_6"/>
<dbReference type="Proteomes" id="UP000000593">
    <property type="component" value="Chromosome 1"/>
</dbReference>
<dbReference type="GO" id="GO:0005737">
    <property type="term" value="C:cytoplasm"/>
    <property type="evidence" value="ECO:0007669"/>
    <property type="project" value="InterPro"/>
</dbReference>
<dbReference type="GO" id="GO:0003746">
    <property type="term" value="F:translation elongation factor activity"/>
    <property type="evidence" value="ECO:0007669"/>
    <property type="project" value="UniProtKB-UniRule"/>
</dbReference>
<dbReference type="GO" id="GO:0043043">
    <property type="term" value="P:peptide biosynthetic process"/>
    <property type="evidence" value="ECO:0007669"/>
    <property type="project" value="InterPro"/>
</dbReference>
<dbReference type="CDD" id="cd05794">
    <property type="entry name" value="S1_EF-P_repeat_2"/>
    <property type="match status" value="1"/>
</dbReference>
<dbReference type="FunFam" id="2.40.50.140:FF:000004">
    <property type="entry name" value="Elongation factor P"/>
    <property type="match status" value="1"/>
</dbReference>
<dbReference type="Gene3D" id="2.30.30.30">
    <property type="match status" value="1"/>
</dbReference>
<dbReference type="Gene3D" id="2.40.50.140">
    <property type="entry name" value="Nucleic acid-binding proteins"/>
    <property type="match status" value="2"/>
</dbReference>
<dbReference type="HAMAP" id="MF_00646">
    <property type="entry name" value="EFP"/>
    <property type="match status" value="1"/>
</dbReference>
<dbReference type="InterPro" id="IPR015365">
    <property type="entry name" value="Elong-fact-P_C"/>
</dbReference>
<dbReference type="InterPro" id="IPR012340">
    <property type="entry name" value="NA-bd_OB-fold"/>
</dbReference>
<dbReference type="InterPro" id="IPR014722">
    <property type="entry name" value="Rib_uL2_dom2"/>
</dbReference>
<dbReference type="InterPro" id="IPR020599">
    <property type="entry name" value="Transl_elong_fac_P/YeiP"/>
</dbReference>
<dbReference type="InterPro" id="IPR013185">
    <property type="entry name" value="Transl_elong_KOW-like"/>
</dbReference>
<dbReference type="InterPro" id="IPR011897">
    <property type="entry name" value="Transl_elong_p-like_YeiP"/>
</dbReference>
<dbReference type="InterPro" id="IPR001059">
    <property type="entry name" value="Transl_elong_P/YeiP_cen"/>
</dbReference>
<dbReference type="InterPro" id="IPR013852">
    <property type="entry name" value="Transl_elong_P/YeiP_CS"/>
</dbReference>
<dbReference type="InterPro" id="IPR008991">
    <property type="entry name" value="Translation_prot_SH3-like_sf"/>
</dbReference>
<dbReference type="NCBIfam" id="NF003392">
    <property type="entry name" value="PRK04542.1"/>
    <property type="match status" value="1"/>
</dbReference>
<dbReference type="NCBIfam" id="TIGR02178">
    <property type="entry name" value="yeiP"/>
    <property type="match status" value="1"/>
</dbReference>
<dbReference type="PANTHER" id="PTHR30053">
    <property type="entry name" value="ELONGATION FACTOR P"/>
    <property type="match status" value="1"/>
</dbReference>
<dbReference type="PANTHER" id="PTHR30053:SF14">
    <property type="entry name" value="TRANSLATION ELONGATION FACTOR KOW-LIKE DOMAIN-CONTAINING PROTEIN"/>
    <property type="match status" value="1"/>
</dbReference>
<dbReference type="Pfam" id="PF01132">
    <property type="entry name" value="EFP"/>
    <property type="match status" value="1"/>
</dbReference>
<dbReference type="Pfam" id="PF08207">
    <property type="entry name" value="EFP_N"/>
    <property type="match status" value="1"/>
</dbReference>
<dbReference type="Pfam" id="PF09285">
    <property type="entry name" value="Elong-fact-P_C"/>
    <property type="match status" value="1"/>
</dbReference>
<dbReference type="PIRSF" id="PIRSF005901">
    <property type="entry name" value="EF-P"/>
    <property type="match status" value="1"/>
</dbReference>
<dbReference type="SMART" id="SM01185">
    <property type="entry name" value="EFP"/>
    <property type="match status" value="1"/>
</dbReference>
<dbReference type="SMART" id="SM00841">
    <property type="entry name" value="Elong-fact-P_C"/>
    <property type="match status" value="1"/>
</dbReference>
<dbReference type="SUPFAM" id="SSF50249">
    <property type="entry name" value="Nucleic acid-binding proteins"/>
    <property type="match status" value="2"/>
</dbReference>
<dbReference type="SUPFAM" id="SSF50104">
    <property type="entry name" value="Translation proteins SH3-like domain"/>
    <property type="match status" value="1"/>
</dbReference>
<dbReference type="PROSITE" id="PS01275">
    <property type="entry name" value="EFP"/>
    <property type="match status" value="1"/>
</dbReference>
<keyword id="KW-1185">Reference proteome</keyword>